<protein>
    <recommendedName>
        <fullName evidence="1">Bifunctional protein FolD</fullName>
    </recommendedName>
    <domain>
        <recommendedName>
            <fullName evidence="1">Methylenetetrahydrofolate dehydrogenase</fullName>
            <ecNumber evidence="1">1.5.1.5</ecNumber>
        </recommendedName>
    </domain>
    <domain>
        <recommendedName>
            <fullName evidence="1">Methenyltetrahydrofolate cyclohydrolase</fullName>
            <ecNumber evidence="1">3.5.4.9</ecNumber>
        </recommendedName>
    </domain>
</protein>
<name>FOLD_NITWN</name>
<accession>Q3SVE4</accession>
<dbReference type="EC" id="1.5.1.5" evidence="1"/>
<dbReference type="EC" id="3.5.4.9" evidence="1"/>
<dbReference type="EMBL" id="CP000115">
    <property type="protein sequence ID" value="ABA03747.1"/>
    <property type="molecule type" value="Genomic_DNA"/>
</dbReference>
<dbReference type="RefSeq" id="WP_011313811.1">
    <property type="nucleotide sequence ID" value="NC_007406.1"/>
</dbReference>
<dbReference type="SMR" id="Q3SVE4"/>
<dbReference type="STRING" id="323098.Nwi_0480"/>
<dbReference type="KEGG" id="nwi:Nwi_0480"/>
<dbReference type="eggNOG" id="COG0190">
    <property type="taxonomic scope" value="Bacteria"/>
</dbReference>
<dbReference type="HOGENOM" id="CLU_034045_2_1_5"/>
<dbReference type="OrthoDB" id="9803580at2"/>
<dbReference type="UniPathway" id="UPA00193"/>
<dbReference type="Proteomes" id="UP000002531">
    <property type="component" value="Chromosome"/>
</dbReference>
<dbReference type="GO" id="GO:0005829">
    <property type="term" value="C:cytosol"/>
    <property type="evidence" value="ECO:0007669"/>
    <property type="project" value="TreeGrafter"/>
</dbReference>
<dbReference type="GO" id="GO:0004477">
    <property type="term" value="F:methenyltetrahydrofolate cyclohydrolase activity"/>
    <property type="evidence" value="ECO:0007669"/>
    <property type="project" value="UniProtKB-UniRule"/>
</dbReference>
<dbReference type="GO" id="GO:0004488">
    <property type="term" value="F:methylenetetrahydrofolate dehydrogenase (NADP+) activity"/>
    <property type="evidence" value="ECO:0007669"/>
    <property type="project" value="UniProtKB-UniRule"/>
</dbReference>
<dbReference type="GO" id="GO:0000105">
    <property type="term" value="P:L-histidine biosynthetic process"/>
    <property type="evidence" value="ECO:0007669"/>
    <property type="project" value="UniProtKB-KW"/>
</dbReference>
<dbReference type="GO" id="GO:0009086">
    <property type="term" value="P:methionine biosynthetic process"/>
    <property type="evidence" value="ECO:0007669"/>
    <property type="project" value="UniProtKB-KW"/>
</dbReference>
<dbReference type="GO" id="GO:0006164">
    <property type="term" value="P:purine nucleotide biosynthetic process"/>
    <property type="evidence" value="ECO:0007669"/>
    <property type="project" value="UniProtKB-KW"/>
</dbReference>
<dbReference type="GO" id="GO:0035999">
    <property type="term" value="P:tetrahydrofolate interconversion"/>
    <property type="evidence" value="ECO:0007669"/>
    <property type="project" value="UniProtKB-UniRule"/>
</dbReference>
<dbReference type="CDD" id="cd01080">
    <property type="entry name" value="NAD_bind_m-THF_DH_Cyclohyd"/>
    <property type="match status" value="1"/>
</dbReference>
<dbReference type="FunFam" id="3.40.50.720:FF:000006">
    <property type="entry name" value="Bifunctional protein FolD"/>
    <property type="match status" value="1"/>
</dbReference>
<dbReference type="FunFam" id="3.40.50.10860:FF:000005">
    <property type="entry name" value="C-1-tetrahydrofolate synthase, cytoplasmic, putative"/>
    <property type="match status" value="1"/>
</dbReference>
<dbReference type="Gene3D" id="3.40.50.10860">
    <property type="entry name" value="Leucine Dehydrogenase, chain A, domain 1"/>
    <property type="match status" value="1"/>
</dbReference>
<dbReference type="Gene3D" id="3.40.50.720">
    <property type="entry name" value="NAD(P)-binding Rossmann-like Domain"/>
    <property type="match status" value="1"/>
</dbReference>
<dbReference type="HAMAP" id="MF_01576">
    <property type="entry name" value="THF_DHG_CYH"/>
    <property type="match status" value="1"/>
</dbReference>
<dbReference type="InterPro" id="IPR046346">
    <property type="entry name" value="Aminoacid_DH-like_N_sf"/>
</dbReference>
<dbReference type="InterPro" id="IPR036291">
    <property type="entry name" value="NAD(P)-bd_dom_sf"/>
</dbReference>
<dbReference type="InterPro" id="IPR000672">
    <property type="entry name" value="THF_DH/CycHdrlase"/>
</dbReference>
<dbReference type="InterPro" id="IPR020630">
    <property type="entry name" value="THF_DH/CycHdrlase_cat_dom"/>
</dbReference>
<dbReference type="InterPro" id="IPR020867">
    <property type="entry name" value="THF_DH/CycHdrlase_CS"/>
</dbReference>
<dbReference type="InterPro" id="IPR020631">
    <property type="entry name" value="THF_DH/CycHdrlase_NAD-bd_dom"/>
</dbReference>
<dbReference type="NCBIfam" id="NF010783">
    <property type="entry name" value="PRK14186.1"/>
    <property type="match status" value="1"/>
</dbReference>
<dbReference type="NCBIfam" id="NF010785">
    <property type="entry name" value="PRK14188.1"/>
    <property type="match status" value="1"/>
</dbReference>
<dbReference type="PANTHER" id="PTHR48099:SF5">
    <property type="entry name" value="C-1-TETRAHYDROFOLATE SYNTHASE, CYTOPLASMIC"/>
    <property type="match status" value="1"/>
</dbReference>
<dbReference type="PANTHER" id="PTHR48099">
    <property type="entry name" value="C-1-TETRAHYDROFOLATE SYNTHASE, CYTOPLASMIC-RELATED"/>
    <property type="match status" value="1"/>
</dbReference>
<dbReference type="Pfam" id="PF00763">
    <property type="entry name" value="THF_DHG_CYH"/>
    <property type="match status" value="1"/>
</dbReference>
<dbReference type="Pfam" id="PF02882">
    <property type="entry name" value="THF_DHG_CYH_C"/>
    <property type="match status" value="1"/>
</dbReference>
<dbReference type="PRINTS" id="PR00085">
    <property type="entry name" value="THFDHDRGNASE"/>
</dbReference>
<dbReference type="SUPFAM" id="SSF53223">
    <property type="entry name" value="Aminoacid dehydrogenase-like, N-terminal domain"/>
    <property type="match status" value="1"/>
</dbReference>
<dbReference type="SUPFAM" id="SSF51735">
    <property type="entry name" value="NAD(P)-binding Rossmann-fold domains"/>
    <property type="match status" value="1"/>
</dbReference>
<dbReference type="PROSITE" id="PS00766">
    <property type="entry name" value="THF_DHG_CYH_1"/>
    <property type="match status" value="1"/>
</dbReference>
<gene>
    <name evidence="1" type="primary">folD</name>
    <name type="ordered locus">Nwi_0480</name>
</gene>
<keyword id="KW-0028">Amino-acid biosynthesis</keyword>
<keyword id="KW-0368">Histidine biosynthesis</keyword>
<keyword id="KW-0378">Hydrolase</keyword>
<keyword id="KW-0486">Methionine biosynthesis</keyword>
<keyword id="KW-0511">Multifunctional enzyme</keyword>
<keyword id="KW-0521">NADP</keyword>
<keyword id="KW-0554">One-carbon metabolism</keyword>
<keyword id="KW-0560">Oxidoreductase</keyword>
<keyword id="KW-0658">Purine biosynthesis</keyword>
<keyword id="KW-1185">Reference proteome</keyword>
<reference key="1">
    <citation type="journal article" date="2006" name="Appl. Environ. Microbiol.">
        <title>Genome sequence of the chemolithoautotrophic nitrite-oxidizing bacterium Nitrobacter winogradskyi Nb-255.</title>
        <authorList>
            <person name="Starkenburg S.R."/>
            <person name="Chain P.S.G."/>
            <person name="Sayavedra-Soto L.A."/>
            <person name="Hauser L."/>
            <person name="Land M.L."/>
            <person name="Larimer F.W."/>
            <person name="Malfatti S.A."/>
            <person name="Klotz M.G."/>
            <person name="Bottomley P.J."/>
            <person name="Arp D.J."/>
            <person name="Hickey W.J."/>
        </authorList>
    </citation>
    <scope>NUCLEOTIDE SEQUENCE [LARGE SCALE GENOMIC DNA]</scope>
    <source>
        <strain>ATCC 25391 / DSM 10237 / CIP 104748 / NCIMB 11846 / Nb-255</strain>
    </source>
</reference>
<comment type="function">
    <text evidence="1">Catalyzes the oxidation of 5,10-methylenetetrahydrofolate to 5,10-methenyltetrahydrofolate and then the hydrolysis of 5,10-methenyltetrahydrofolate to 10-formyltetrahydrofolate.</text>
</comment>
<comment type="catalytic activity">
    <reaction evidence="1">
        <text>(6R)-5,10-methylene-5,6,7,8-tetrahydrofolate + NADP(+) = (6R)-5,10-methenyltetrahydrofolate + NADPH</text>
        <dbReference type="Rhea" id="RHEA:22812"/>
        <dbReference type="ChEBI" id="CHEBI:15636"/>
        <dbReference type="ChEBI" id="CHEBI:57455"/>
        <dbReference type="ChEBI" id="CHEBI:57783"/>
        <dbReference type="ChEBI" id="CHEBI:58349"/>
        <dbReference type="EC" id="1.5.1.5"/>
    </reaction>
</comment>
<comment type="catalytic activity">
    <reaction evidence="1">
        <text>(6R)-5,10-methenyltetrahydrofolate + H2O = (6R)-10-formyltetrahydrofolate + H(+)</text>
        <dbReference type="Rhea" id="RHEA:23700"/>
        <dbReference type="ChEBI" id="CHEBI:15377"/>
        <dbReference type="ChEBI" id="CHEBI:15378"/>
        <dbReference type="ChEBI" id="CHEBI:57455"/>
        <dbReference type="ChEBI" id="CHEBI:195366"/>
        <dbReference type="EC" id="3.5.4.9"/>
    </reaction>
</comment>
<comment type="pathway">
    <text evidence="1">One-carbon metabolism; tetrahydrofolate interconversion.</text>
</comment>
<comment type="subunit">
    <text evidence="1">Homodimer.</text>
</comment>
<comment type="similarity">
    <text evidence="1">Belongs to the tetrahydrofolate dehydrogenase/cyclohydrolase family.</text>
</comment>
<sequence>MAASIIDGKVIAADLRARVAGEVTRIKRDHGLTPGLAVVLVGNDPASEVYVRNKHKQTQAAGMASFEHMLPADVAQADVLALIAELNADPAVHGILVQLPLPKGLDTEAIIAAIDPAKDVDGLHPHNAGRLAGGLSALSPCTPLGCIILTKSVHASLEGLDAIVIGRSNLVGRPLVQLLLNENATVTIAHSRSRNLPELCRRADLVYAAVGRAEMVRGDWLKPGATVIDVGITRVPAAEGKTRLIGDVAFDEAMQVAGAVTPVPGGVGQMTVACLLVNTLRAACAIEGLSAPGV</sequence>
<feature type="chain" id="PRO_0000268419" description="Bifunctional protein FolD">
    <location>
        <begin position="1"/>
        <end position="294"/>
    </location>
</feature>
<feature type="binding site" evidence="1">
    <location>
        <begin position="166"/>
        <end position="168"/>
    </location>
    <ligand>
        <name>NADP(+)</name>
        <dbReference type="ChEBI" id="CHEBI:58349"/>
    </ligand>
</feature>
<feature type="binding site" evidence="1">
    <location>
        <position position="191"/>
    </location>
    <ligand>
        <name>NADP(+)</name>
        <dbReference type="ChEBI" id="CHEBI:58349"/>
    </ligand>
</feature>
<feature type="binding site" evidence="1">
    <location>
        <position position="232"/>
    </location>
    <ligand>
        <name>NADP(+)</name>
        <dbReference type="ChEBI" id="CHEBI:58349"/>
    </ligand>
</feature>
<evidence type="ECO:0000255" key="1">
    <source>
        <dbReference type="HAMAP-Rule" id="MF_01576"/>
    </source>
</evidence>
<proteinExistence type="inferred from homology"/>
<organism>
    <name type="scientific">Nitrobacter winogradskyi (strain ATCC 25391 / DSM 10237 / CIP 104748 / NCIMB 11846 / Nb-255)</name>
    <dbReference type="NCBI Taxonomy" id="323098"/>
    <lineage>
        <taxon>Bacteria</taxon>
        <taxon>Pseudomonadati</taxon>
        <taxon>Pseudomonadota</taxon>
        <taxon>Alphaproteobacteria</taxon>
        <taxon>Hyphomicrobiales</taxon>
        <taxon>Nitrobacteraceae</taxon>
        <taxon>Nitrobacter</taxon>
    </lineage>
</organism>